<proteinExistence type="inferred from homology"/>
<evidence type="ECO:0000255" key="1">
    <source>
        <dbReference type="HAMAP-Rule" id="MF_00235"/>
    </source>
</evidence>
<dbReference type="EC" id="2.7.4.3" evidence="1"/>
<dbReference type="EMBL" id="AE009948">
    <property type="protein sequence ID" value="AAM98987.1"/>
    <property type="molecule type" value="Genomic_DNA"/>
</dbReference>
<dbReference type="RefSeq" id="NP_687115.1">
    <property type="nucleotide sequence ID" value="NC_004116.1"/>
</dbReference>
<dbReference type="RefSeq" id="WP_001050420.1">
    <property type="nucleotide sequence ID" value="NC_004116.1"/>
</dbReference>
<dbReference type="SMR" id="P65204"/>
<dbReference type="STRING" id="208435.SAG0079"/>
<dbReference type="KEGG" id="sag:SAG0079"/>
<dbReference type="PATRIC" id="fig|208435.3.peg.78"/>
<dbReference type="HOGENOM" id="CLU_032354_1_2_9"/>
<dbReference type="OrthoDB" id="9805030at2"/>
<dbReference type="UniPathway" id="UPA00588">
    <property type="reaction ID" value="UER00649"/>
</dbReference>
<dbReference type="Proteomes" id="UP000000821">
    <property type="component" value="Chromosome"/>
</dbReference>
<dbReference type="GO" id="GO:0005737">
    <property type="term" value="C:cytoplasm"/>
    <property type="evidence" value="ECO:0007669"/>
    <property type="project" value="UniProtKB-SubCell"/>
</dbReference>
<dbReference type="GO" id="GO:0004017">
    <property type="term" value="F:adenylate kinase activity"/>
    <property type="evidence" value="ECO:0007669"/>
    <property type="project" value="UniProtKB-UniRule"/>
</dbReference>
<dbReference type="GO" id="GO:0005524">
    <property type="term" value="F:ATP binding"/>
    <property type="evidence" value="ECO:0007669"/>
    <property type="project" value="UniProtKB-UniRule"/>
</dbReference>
<dbReference type="GO" id="GO:0044209">
    <property type="term" value="P:AMP salvage"/>
    <property type="evidence" value="ECO:0007669"/>
    <property type="project" value="UniProtKB-UniRule"/>
</dbReference>
<dbReference type="CDD" id="cd01428">
    <property type="entry name" value="ADK"/>
    <property type="match status" value="1"/>
</dbReference>
<dbReference type="FunFam" id="3.40.50.300:FF:000106">
    <property type="entry name" value="Adenylate kinase mitochondrial"/>
    <property type="match status" value="1"/>
</dbReference>
<dbReference type="Gene3D" id="3.40.50.300">
    <property type="entry name" value="P-loop containing nucleotide triphosphate hydrolases"/>
    <property type="match status" value="1"/>
</dbReference>
<dbReference type="HAMAP" id="MF_00235">
    <property type="entry name" value="Adenylate_kinase_Adk"/>
    <property type="match status" value="1"/>
</dbReference>
<dbReference type="InterPro" id="IPR006259">
    <property type="entry name" value="Adenyl_kin_sub"/>
</dbReference>
<dbReference type="InterPro" id="IPR000850">
    <property type="entry name" value="Adenylat/UMP-CMP_kin"/>
</dbReference>
<dbReference type="InterPro" id="IPR033690">
    <property type="entry name" value="Adenylat_kinase_CS"/>
</dbReference>
<dbReference type="InterPro" id="IPR027417">
    <property type="entry name" value="P-loop_NTPase"/>
</dbReference>
<dbReference type="NCBIfam" id="TIGR01351">
    <property type="entry name" value="adk"/>
    <property type="match status" value="1"/>
</dbReference>
<dbReference type="NCBIfam" id="NF001380">
    <property type="entry name" value="PRK00279.1-2"/>
    <property type="match status" value="1"/>
</dbReference>
<dbReference type="NCBIfam" id="NF001381">
    <property type="entry name" value="PRK00279.1-3"/>
    <property type="match status" value="1"/>
</dbReference>
<dbReference type="NCBIfam" id="NF001382">
    <property type="entry name" value="PRK00279.1-4"/>
    <property type="match status" value="1"/>
</dbReference>
<dbReference type="NCBIfam" id="NF011100">
    <property type="entry name" value="PRK14527.1"/>
    <property type="match status" value="1"/>
</dbReference>
<dbReference type="PANTHER" id="PTHR23359">
    <property type="entry name" value="NUCLEOTIDE KINASE"/>
    <property type="match status" value="1"/>
</dbReference>
<dbReference type="Pfam" id="PF00406">
    <property type="entry name" value="ADK"/>
    <property type="match status" value="1"/>
</dbReference>
<dbReference type="PRINTS" id="PR00094">
    <property type="entry name" value="ADENYLTKNASE"/>
</dbReference>
<dbReference type="SUPFAM" id="SSF52540">
    <property type="entry name" value="P-loop containing nucleoside triphosphate hydrolases"/>
    <property type="match status" value="1"/>
</dbReference>
<dbReference type="PROSITE" id="PS00113">
    <property type="entry name" value="ADENYLATE_KINASE"/>
    <property type="match status" value="1"/>
</dbReference>
<sequence length="212" mass="23696">MNLLIMGLPGAGKGTQAAKIVEEFGVAHISTGDMFRAAMANQTEMGRLAKSYIDKGELVPDEVTNGIVKERLAEDDIAEKGFLLDGYPRTIEQAHALDATLEELGLRLDGVINIKVDPSCLIERLSGRIINRKTGETFHKVFNPPVDYKEEDYYQREDDKPETVKRRLDVNIAQGEPILEHYRKLGLVTDIEGNQEITEVFADVEKALLELK</sequence>
<reference key="1">
    <citation type="journal article" date="2002" name="Proc. Natl. Acad. Sci. U.S.A.">
        <title>Complete genome sequence and comparative genomic analysis of an emerging human pathogen, serotype V Streptococcus agalactiae.</title>
        <authorList>
            <person name="Tettelin H."/>
            <person name="Masignani V."/>
            <person name="Cieslewicz M.J."/>
            <person name="Eisen J.A."/>
            <person name="Peterson S.N."/>
            <person name="Wessels M.R."/>
            <person name="Paulsen I.T."/>
            <person name="Nelson K.E."/>
            <person name="Margarit I."/>
            <person name="Read T.D."/>
            <person name="Madoff L.C."/>
            <person name="Wolf A.M."/>
            <person name="Beanan M.J."/>
            <person name="Brinkac L.M."/>
            <person name="Daugherty S.C."/>
            <person name="DeBoy R.T."/>
            <person name="Durkin A.S."/>
            <person name="Kolonay J.F."/>
            <person name="Madupu R."/>
            <person name="Lewis M.R."/>
            <person name="Radune D."/>
            <person name="Fedorova N.B."/>
            <person name="Scanlan D."/>
            <person name="Khouri H.M."/>
            <person name="Mulligan S."/>
            <person name="Carty H.A."/>
            <person name="Cline R.T."/>
            <person name="Van Aken S.E."/>
            <person name="Gill J."/>
            <person name="Scarselli M."/>
            <person name="Mora M."/>
            <person name="Iacobini E.T."/>
            <person name="Brettoni C."/>
            <person name="Galli G."/>
            <person name="Mariani M."/>
            <person name="Vegni F."/>
            <person name="Maione D."/>
            <person name="Rinaudo D."/>
            <person name="Rappuoli R."/>
            <person name="Telford J.L."/>
            <person name="Kasper D.L."/>
            <person name="Grandi G."/>
            <person name="Fraser C.M."/>
        </authorList>
    </citation>
    <scope>NUCLEOTIDE SEQUENCE [LARGE SCALE GENOMIC DNA]</scope>
    <source>
        <strain>ATCC BAA-611 / 2603 V/R</strain>
    </source>
</reference>
<feature type="chain" id="PRO_0000158854" description="Adenylate kinase">
    <location>
        <begin position="1"/>
        <end position="212"/>
    </location>
</feature>
<feature type="region of interest" description="NMP" evidence="1">
    <location>
        <begin position="30"/>
        <end position="59"/>
    </location>
</feature>
<feature type="region of interest" description="LID" evidence="1">
    <location>
        <begin position="127"/>
        <end position="159"/>
    </location>
</feature>
<feature type="binding site" evidence="1">
    <location>
        <begin position="10"/>
        <end position="15"/>
    </location>
    <ligand>
        <name>ATP</name>
        <dbReference type="ChEBI" id="CHEBI:30616"/>
    </ligand>
</feature>
<feature type="binding site" evidence="1">
    <location>
        <position position="31"/>
    </location>
    <ligand>
        <name>AMP</name>
        <dbReference type="ChEBI" id="CHEBI:456215"/>
    </ligand>
</feature>
<feature type="binding site" evidence="1">
    <location>
        <position position="36"/>
    </location>
    <ligand>
        <name>AMP</name>
        <dbReference type="ChEBI" id="CHEBI:456215"/>
    </ligand>
</feature>
<feature type="binding site" evidence="1">
    <location>
        <begin position="57"/>
        <end position="59"/>
    </location>
    <ligand>
        <name>AMP</name>
        <dbReference type="ChEBI" id="CHEBI:456215"/>
    </ligand>
</feature>
<feature type="binding site" evidence="1">
    <location>
        <begin position="86"/>
        <end position="89"/>
    </location>
    <ligand>
        <name>AMP</name>
        <dbReference type="ChEBI" id="CHEBI:456215"/>
    </ligand>
</feature>
<feature type="binding site" evidence="1">
    <location>
        <position position="93"/>
    </location>
    <ligand>
        <name>AMP</name>
        <dbReference type="ChEBI" id="CHEBI:456215"/>
    </ligand>
</feature>
<feature type="binding site" evidence="1">
    <location>
        <position position="128"/>
    </location>
    <ligand>
        <name>ATP</name>
        <dbReference type="ChEBI" id="CHEBI:30616"/>
    </ligand>
</feature>
<feature type="binding site" evidence="1">
    <location>
        <begin position="137"/>
        <end position="138"/>
    </location>
    <ligand>
        <name>ATP</name>
        <dbReference type="ChEBI" id="CHEBI:30616"/>
    </ligand>
</feature>
<feature type="binding site" evidence="1">
    <location>
        <position position="156"/>
    </location>
    <ligand>
        <name>AMP</name>
        <dbReference type="ChEBI" id="CHEBI:456215"/>
    </ligand>
</feature>
<feature type="binding site" evidence="1">
    <location>
        <position position="167"/>
    </location>
    <ligand>
        <name>AMP</name>
        <dbReference type="ChEBI" id="CHEBI:456215"/>
    </ligand>
</feature>
<feature type="binding site" evidence="1">
    <location>
        <position position="195"/>
    </location>
    <ligand>
        <name>ATP</name>
        <dbReference type="ChEBI" id="CHEBI:30616"/>
    </ligand>
</feature>
<comment type="function">
    <text evidence="1">Catalyzes the reversible transfer of the terminal phosphate group between ATP and AMP. Plays an important role in cellular energy homeostasis and in adenine nucleotide metabolism.</text>
</comment>
<comment type="catalytic activity">
    <reaction evidence="1">
        <text>AMP + ATP = 2 ADP</text>
        <dbReference type="Rhea" id="RHEA:12973"/>
        <dbReference type="ChEBI" id="CHEBI:30616"/>
        <dbReference type="ChEBI" id="CHEBI:456215"/>
        <dbReference type="ChEBI" id="CHEBI:456216"/>
        <dbReference type="EC" id="2.7.4.3"/>
    </reaction>
</comment>
<comment type="pathway">
    <text evidence="1">Purine metabolism; AMP biosynthesis via salvage pathway; AMP from ADP: step 1/1.</text>
</comment>
<comment type="subunit">
    <text evidence="1">Monomer.</text>
</comment>
<comment type="subcellular location">
    <subcellularLocation>
        <location evidence="1">Cytoplasm</location>
    </subcellularLocation>
</comment>
<comment type="domain">
    <text evidence="1">Consists of three domains, a large central CORE domain and two small peripheral domains, NMPbind and LID, which undergo movements during catalysis. The LID domain closes over the site of phosphoryl transfer upon ATP binding. Assembling and dissambling the active center during each catalytic cycle provides an effective means to prevent ATP hydrolysis.</text>
</comment>
<comment type="similarity">
    <text evidence="1">Belongs to the adenylate kinase family.</text>
</comment>
<gene>
    <name evidence="1" type="primary">adk</name>
    <name type="ordered locus">SAG0079</name>
</gene>
<name>KAD_STRA5</name>
<keyword id="KW-0067">ATP-binding</keyword>
<keyword id="KW-0963">Cytoplasm</keyword>
<keyword id="KW-0418">Kinase</keyword>
<keyword id="KW-0545">Nucleotide biosynthesis</keyword>
<keyword id="KW-0547">Nucleotide-binding</keyword>
<keyword id="KW-1185">Reference proteome</keyword>
<keyword id="KW-0808">Transferase</keyword>
<accession>P65204</accession>
<accession>Q8E2B3</accession>
<accession>Q8E7S0</accession>
<protein>
    <recommendedName>
        <fullName evidence="1">Adenylate kinase</fullName>
        <shortName evidence="1">AK</shortName>
        <ecNumber evidence="1">2.7.4.3</ecNumber>
    </recommendedName>
    <alternativeName>
        <fullName evidence="1">ATP-AMP transphosphorylase</fullName>
    </alternativeName>
    <alternativeName>
        <fullName evidence="1">ATP:AMP phosphotransferase</fullName>
    </alternativeName>
    <alternativeName>
        <fullName evidence="1">Adenylate monophosphate kinase</fullName>
    </alternativeName>
</protein>
<organism>
    <name type="scientific">Streptococcus agalactiae serotype V (strain ATCC BAA-611 / 2603 V/R)</name>
    <dbReference type="NCBI Taxonomy" id="208435"/>
    <lineage>
        <taxon>Bacteria</taxon>
        <taxon>Bacillati</taxon>
        <taxon>Bacillota</taxon>
        <taxon>Bacilli</taxon>
        <taxon>Lactobacillales</taxon>
        <taxon>Streptococcaceae</taxon>
        <taxon>Streptococcus</taxon>
    </lineage>
</organism>